<dbReference type="EMBL" id="CP000743">
    <property type="protein sequence ID" value="ABR56759.1"/>
    <property type="molecule type" value="Genomic_DNA"/>
</dbReference>
<dbReference type="RefSeq" id="WP_011973891.1">
    <property type="nucleotide sequence ID" value="NC_009635.1"/>
</dbReference>
<dbReference type="SMR" id="A6UW87"/>
<dbReference type="STRING" id="419665.Maeo_1182"/>
<dbReference type="GeneID" id="5327488"/>
<dbReference type="KEGG" id="mae:Maeo_1182"/>
<dbReference type="eggNOG" id="arCOG01008">
    <property type="taxonomic scope" value="Archaea"/>
</dbReference>
<dbReference type="HOGENOM" id="CLU_113319_1_2_2"/>
<dbReference type="OrthoDB" id="25654at2157"/>
<dbReference type="Proteomes" id="UP000001106">
    <property type="component" value="Chromosome"/>
</dbReference>
<dbReference type="GO" id="GO:0003677">
    <property type="term" value="F:DNA binding"/>
    <property type="evidence" value="ECO:0007669"/>
    <property type="project" value="UniProtKB-KW"/>
</dbReference>
<dbReference type="GO" id="GO:0003700">
    <property type="term" value="F:DNA-binding transcription factor activity"/>
    <property type="evidence" value="ECO:0007669"/>
    <property type="project" value="UniProtKB-UniRule"/>
</dbReference>
<dbReference type="GO" id="GO:0016151">
    <property type="term" value="F:nickel cation binding"/>
    <property type="evidence" value="ECO:0007669"/>
    <property type="project" value="UniProtKB-UniRule"/>
</dbReference>
<dbReference type="GO" id="GO:0010045">
    <property type="term" value="P:response to nickel cation"/>
    <property type="evidence" value="ECO:0007669"/>
    <property type="project" value="InterPro"/>
</dbReference>
<dbReference type="CDD" id="cd22231">
    <property type="entry name" value="RHH_NikR_HicB-like"/>
    <property type="match status" value="1"/>
</dbReference>
<dbReference type="Gene3D" id="3.30.70.1150">
    <property type="entry name" value="ACT-like. Chain A, domain 2"/>
    <property type="match status" value="1"/>
</dbReference>
<dbReference type="Gene3D" id="1.10.1220.10">
    <property type="entry name" value="Met repressor-like"/>
    <property type="match status" value="1"/>
</dbReference>
<dbReference type="HAMAP" id="MF_00476">
    <property type="entry name" value="NikR"/>
    <property type="match status" value="1"/>
</dbReference>
<dbReference type="InterPro" id="IPR027271">
    <property type="entry name" value="Acetolactate_synth/TF_NikR_C"/>
</dbReference>
<dbReference type="InterPro" id="IPR045865">
    <property type="entry name" value="ACT-like_dom_sf"/>
</dbReference>
<dbReference type="InterPro" id="IPR013321">
    <property type="entry name" value="Arc_rbn_hlx_hlx"/>
</dbReference>
<dbReference type="InterPro" id="IPR002145">
    <property type="entry name" value="CopG"/>
</dbReference>
<dbReference type="InterPro" id="IPR050192">
    <property type="entry name" value="CopG/NikR_regulator"/>
</dbReference>
<dbReference type="InterPro" id="IPR022988">
    <property type="entry name" value="Ni_resp_reg_NikR"/>
</dbReference>
<dbReference type="InterPro" id="IPR010985">
    <property type="entry name" value="Ribbon_hlx_hlx"/>
</dbReference>
<dbReference type="InterPro" id="IPR014864">
    <property type="entry name" value="TF_NikR_Ni-bd_C"/>
</dbReference>
<dbReference type="NCBIfam" id="NF001884">
    <property type="entry name" value="PRK00630.1"/>
    <property type="match status" value="1"/>
</dbReference>
<dbReference type="NCBIfam" id="NF002169">
    <property type="entry name" value="PRK01002.1"/>
    <property type="match status" value="1"/>
</dbReference>
<dbReference type="NCBIfam" id="NF002815">
    <property type="entry name" value="PRK02967.1"/>
    <property type="match status" value="1"/>
</dbReference>
<dbReference type="NCBIfam" id="NF003381">
    <property type="entry name" value="PRK04460.1"/>
    <property type="match status" value="1"/>
</dbReference>
<dbReference type="PANTHER" id="PTHR34719">
    <property type="entry name" value="NICKEL-RESPONSIVE REGULATOR"/>
    <property type="match status" value="1"/>
</dbReference>
<dbReference type="PANTHER" id="PTHR34719:SF2">
    <property type="entry name" value="NICKEL-RESPONSIVE REGULATOR"/>
    <property type="match status" value="1"/>
</dbReference>
<dbReference type="Pfam" id="PF08753">
    <property type="entry name" value="NikR_C"/>
    <property type="match status" value="1"/>
</dbReference>
<dbReference type="Pfam" id="PF01402">
    <property type="entry name" value="RHH_1"/>
    <property type="match status" value="1"/>
</dbReference>
<dbReference type="SUPFAM" id="SSF55021">
    <property type="entry name" value="ACT-like"/>
    <property type="match status" value="1"/>
</dbReference>
<dbReference type="SUPFAM" id="SSF47598">
    <property type="entry name" value="Ribbon-helix-helix"/>
    <property type="match status" value="1"/>
</dbReference>
<sequence>MVDMDRISISLPTKLLGEFDEIIGDRGYASRSEAIRDSIRDYIIKHKWIHSLEGERSGTITIIYDHHASDLMERITTIQHDYSNLIVATLHMHMDHDNCMEVVIVRGDAKIIRELTDRLTSQKGVKQVKLNVMVPGGNIPE</sequence>
<reference key="1">
    <citation type="submission" date="2007-06" db="EMBL/GenBank/DDBJ databases">
        <title>Complete sequence of Methanococcus aeolicus Nankai-3.</title>
        <authorList>
            <consortium name="US DOE Joint Genome Institute"/>
            <person name="Copeland A."/>
            <person name="Lucas S."/>
            <person name="Lapidus A."/>
            <person name="Barry K."/>
            <person name="Glavina del Rio T."/>
            <person name="Dalin E."/>
            <person name="Tice H."/>
            <person name="Pitluck S."/>
            <person name="Chain P."/>
            <person name="Malfatti S."/>
            <person name="Shin M."/>
            <person name="Vergez L."/>
            <person name="Schmutz J."/>
            <person name="Larimer F."/>
            <person name="Land M."/>
            <person name="Hauser L."/>
            <person name="Kyrpides N."/>
            <person name="Lykidis A."/>
            <person name="Sieprawska-Lupa M."/>
            <person name="Whitman W.B."/>
            <person name="Richardson P."/>
        </authorList>
    </citation>
    <scope>NUCLEOTIDE SEQUENCE [LARGE SCALE GENOMIC DNA]</scope>
    <source>
        <strain>ATCC BAA-1280 / DSM 17508 / OCM 812 / Nankai-3</strain>
    </source>
</reference>
<accession>A6UW87</accession>
<gene>
    <name type="ordered locus">Maeo_1182</name>
</gene>
<protein>
    <recommendedName>
        <fullName evidence="1">Putative nickel-responsive regulator</fullName>
    </recommendedName>
</protein>
<evidence type="ECO:0000255" key="1">
    <source>
        <dbReference type="HAMAP-Rule" id="MF_00476"/>
    </source>
</evidence>
<feature type="chain" id="PRO_1000014071" description="Putative nickel-responsive regulator">
    <location>
        <begin position="1"/>
        <end position="141"/>
    </location>
</feature>
<feature type="binding site" evidence="1">
    <location>
        <position position="80"/>
    </location>
    <ligand>
        <name>Ni(2+)</name>
        <dbReference type="ChEBI" id="CHEBI:49786"/>
    </ligand>
</feature>
<feature type="binding site" evidence="1">
    <location>
        <position position="91"/>
    </location>
    <ligand>
        <name>Ni(2+)</name>
        <dbReference type="ChEBI" id="CHEBI:49786"/>
    </ligand>
</feature>
<feature type="binding site" evidence="1">
    <location>
        <position position="93"/>
    </location>
    <ligand>
        <name>Ni(2+)</name>
        <dbReference type="ChEBI" id="CHEBI:49786"/>
    </ligand>
</feature>
<feature type="binding site" evidence="1">
    <location>
        <position position="99"/>
    </location>
    <ligand>
        <name>Ni(2+)</name>
        <dbReference type="ChEBI" id="CHEBI:49786"/>
    </ligand>
</feature>
<organism>
    <name type="scientific">Methanococcus aeolicus (strain ATCC BAA-1280 / DSM 17508 / OCM 812 / Nankai-3)</name>
    <dbReference type="NCBI Taxonomy" id="419665"/>
    <lineage>
        <taxon>Archaea</taxon>
        <taxon>Methanobacteriati</taxon>
        <taxon>Methanobacteriota</taxon>
        <taxon>Methanomada group</taxon>
        <taxon>Methanococci</taxon>
        <taxon>Methanococcales</taxon>
        <taxon>Methanococcaceae</taxon>
        <taxon>Methanococcus</taxon>
    </lineage>
</organism>
<keyword id="KW-0238">DNA-binding</keyword>
<keyword id="KW-0479">Metal-binding</keyword>
<keyword id="KW-0533">Nickel</keyword>
<keyword id="KW-0804">Transcription</keyword>
<keyword id="KW-0805">Transcription regulation</keyword>
<comment type="function">
    <text evidence="1">Transcriptional regulator.</text>
</comment>
<comment type="cofactor">
    <cofactor evidence="1">
        <name>Ni(2+)</name>
        <dbReference type="ChEBI" id="CHEBI:49786"/>
    </cofactor>
    <text evidence="1">Binds 1 nickel ion per subunit.</text>
</comment>
<comment type="similarity">
    <text evidence="1">Belongs to the transcriptional regulatory CopG/NikR family.</text>
</comment>
<name>NIKR_META3</name>
<proteinExistence type="inferred from homology"/>